<feature type="chain" id="PRO_0000153996" description="TBP-related factor">
    <location>
        <begin position="1"/>
        <end position="224"/>
    </location>
</feature>
<feature type="repeat" description="1" evidence="3">
    <location>
        <begin position="51"/>
        <end position="127"/>
    </location>
</feature>
<feature type="repeat" description="2" evidence="3">
    <location>
        <begin position="141"/>
        <end position="218"/>
    </location>
</feature>
<feature type="region of interest" description="Disordered" evidence="1">
    <location>
        <begin position="14"/>
        <end position="34"/>
    </location>
</feature>
<feature type="compositionally biased region" description="Low complexity" evidence="1">
    <location>
        <begin position="17"/>
        <end position="34"/>
    </location>
</feature>
<name>TRF_DROME</name>
<reference evidence="3" key="1">
    <citation type="journal article" date="1993" name="Nature">
        <title>A new factor related to TATA-binding protein has highly restricted expression patterns in Drosophila.</title>
        <authorList>
            <person name="Crowley T.E."/>
            <person name="Hoey T."/>
            <person name="Liu J.-K."/>
            <person name="Jan Y.N."/>
            <person name="Jan L.Y."/>
            <person name="Tjian R."/>
        </authorList>
    </citation>
    <scope>NUCLEOTIDE SEQUENCE</scope>
    <scope>TISSUE SPECIFICITY</scope>
    <source>
        <strain>Canton-S</strain>
        <tissue>Testis</tissue>
    </source>
</reference>
<reference evidence="3" key="2">
    <citation type="journal article" date="2000" name="Science">
        <title>The genome sequence of Drosophila melanogaster.</title>
        <authorList>
            <person name="Adams M.D."/>
            <person name="Celniker S.E."/>
            <person name="Holt R.A."/>
            <person name="Evans C.A."/>
            <person name="Gocayne J.D."/>
            <person name="Amanatides P.G."/>
            <person name="Scherer S.E."/>
            <person name="Li P.W."/>
            <person name="Hoskins R.A."/>
            <person name="Galle R.F."/>
            <person name="George R.A."/>
            <person name="Lewis S.E."/>
            <person name="Richards S."/>
            <person name="Ashburner M."/>
            <person name="Henderson S.N."/>
            <person name="Sutton G.G."/>
            <person name="Wortman J.R."/>
            <person name="Yandell M.D."/>
            <person name="Zhang Q."/>
            <person name="Chen L.X."/>
            <person name="Brandon R.C."/>
            <person name="Rogers Y.-H.C."/>
            <person name="Blazej R.G."/>
            <person name="Champe M."/>
            <person name="Pfeiffer B.D."/>
            <person name="Wan K.H."/>
            <person name="Doyle C."/>
            <person name="Baxter E.G."/>
            <person name="Helt G."/>
            <person name="Nelson C.R."/>
            <person name="Miklos G.L.G."/>
            <person name="Abril J.F."/>
            <person name="Agbayani A."/>
            <person name="An H.-J."/>
            <person name="Andrews-Pfannkoch C."/>
            <person name="Baldwin D."/>
            <person name="Ballew R.M."/>
            <person name="Basu A."/>
            <person name="Baxendale J."/>
            <person name="Bayraktaroglu L."/>
            <person name="Beasley E.M."/>
            <person name="Beeson K.Y."/>
            <person name="Benos P.V."/>
            <person name="Berman B.P."/>
            <person name="Bhandari D."/>
            <person name="Bolshakov S."/>
            <person name="Borkova D."/>
            <person name="Botchan M.R."/>
            <person name="Bouck J."/>
            <person name="Brokstein P."/>
            <person name="Brottier P."/>
            <person name="Burtis K.C."/>
            <person name="Busam D.A."/>
            <person name="Butler H."/>
            <person name="Cadieu E."/>
            <person name="Center A."/>
            <person name="Chandra I."/>
            <person name="Cherry J.M."/>
            <person name="Cawley S."/>
            <person name="Dahlke C."/>
            <person name="Davenport L.B."/>
            <person name="Davies P."/>
            <person name="de Pablos B."/>
            <person name="Delcher A."/>
            <person name="Deng Z."/>
            <person name="Mays A.D."/>
            <person name="Dew I."/>
            <person name="Dietz S.M."/>
            <person name="Dodson K."/>
            <person name="Doup L.E."/>
            <person name="Downes M."/>
            <person name="Dugan-Rocha S."/>
            <person name="Dunkov B.C."/>
            <person name="Dunn P."/>
            <person name="Durbin K.J."/>
            <person name="Evangelista C.C."/>
            <person name="Ferraz C."/>
            <person name="Ferriera S."/>
            <person name="Fleischmann W."/>
            <person name="Fosler C."/>
            <person name="Gabrielian A.E."/>
            <person name="Garg N.S."/>
            <person name="Gelbart W.M."/>
            <person name="Glasser K."/>
            <person name="Glodek A."/>
            <person name="Gong F."/>
            <person name="Gorrell J.H."/>
            <person name="Gu Z."/>
            <person name="Guan P."/>
            <person name="Harris M."/>
            <person name="Harris N.L."/>
            <person name="Harvey D.A."/>
            <person name="Heiman T.J."/>
            <person name="Hernandez J.R."/>
            <person name="Houck J."/>
            <person name="Hostin D."/>
            <person name="Houston K.A."/>
            <person name="Howland T.J."/>
            <person name="Wei M.-H."/>
            <person name="Ibegwam C."/>
            <person name="Jalali M."/>
            <person name="Kalush F."/>
            <person name="Karpen G.H."/>
            <person name="Ke Z."/>
            <person name="Kennison J.A."/>
            <person name="Ketchum K.A."/>
            <person name="Kimmel B.E."/>
            <person name="Kodira C.D."/>
            <person name="Kraft C.L."/>
            <person name="Kravitz S."/>
            <person name="Kulp D."/>
            <person name="Lai Z."/>
            <person name="Lasko P."/>
            <person name="Lei Y."/>
            <person name="Levitsky A.A."/>
            <person name="Li J.H."/>
            <person name="Li Z."/>
            <person name="Liang Y."/>
            <person name="Lin X."/>
            <person name="Liu X."/>
            <person name="Mattei B."/>
            <person name="McIntosh T.C."/>
            <person name="McLeod M.P."/>
            <person name="McPherson D."/>
            <person name="Merkulov G."/>
            <person name="Milshina N.V."/>
            <person name="Mobarry C."/>
            <person name="Morris J."/>
            <person name="Moshrefi A."/>
            <person name="Mount S.M."/>
            <person name="Moy M."/>
            <person name="Murphy B."/>
            <person name="Murphy L."/>
            <person name="Muzny D.M."/>
            <person name="Nelson D.L."/>
            <person name="Nelson D.R."/>
            <person name="Nelson K.A."/>
            <person name="Nixon K."/>
            <person name="Nusskern D.R."/>
            <person name="Pacleb J.M."/>
            <person name="Palazzolo M."/>
            <person name="Pittman G.S."/>
            <person name="Pan S."/>
            <person name="Pollard J."/>
            <person name="Puri V."/>
            <person name="Reese M.G."/>
            <person name="Reinert K."/>
            <person name="Remington K."/>
            <person name="Saunders R.D.C."/>
            <person name="Scheeler F."/>
            <person name="Shen H."/>
            <person name="Shue B.C."/>
            <person name="Siden-Kiamos I."/>
            <person name="Simpson M."/>
            <person name="Skupski M.P."/>
            <person name="Smith T.J."/>
            <person name="Spier E."/>
            <person name="Spradling A.C."/>
            <person name="Stapleton M."/>
            <person name="Strong R."/>
            <person name="Sun E."/>
            <person name="Svirskas R."/>
            <person name="Tector C."/>
            <person name="Turner R."/>
            <person name="Venter E."/>
            <person name="Wang A.H."/>
            <person name="Wang X."/>
            <person name="Wang Z.-Y."/>
            <person name="Wassarman D.A."/>
            <person name="Weinstock G.M."/>
            <person name="Weissenbach J."/>
            <person name="Williams S.M."/>
            <person name="Woodage T."/>
            <person name="Worley K.C."/>
            <person name="Wu D."/>
            <person name="Yang S."/>
            <person name="Yao Q.A."/>
            <person name="Ye J."/>
            <person name="Yeh R.-F."/>
            <person name="Zaveri J.S."/>
            <person name="Zhan M."/>
            <person name="Zhang G."/>
            <person name="Zhao Q."/>
            <person name="Zheng L."/>
            <person name="Zheng X.H."/>
            <person name="Zhong F.N."/>
            <person name="Zhong W."/>
            <person name="Zhou X."/>
            <person name="Zhu S.C."/>
            <person name="Zhu X."/>
            <person name="Smith H.O."/>
            <person name="Gibbs R.A."/>
            <person name="Myers E.W."/>
            <person name="Rubin G.M."/>
            <person name="Venter J.C."/>
        </authorList>
    </citation>
    <scope>NUCLEOTIDE SEQUENCE [LARGE SCALE GENOMIC DNA]</scope>
    <source>
        <strain>Berkeley</strain>
    </source>
</reference>
<reference key="3">
    <citation type="journal article" date="2002" name="Genome Biol.">
        <title>Annotation of the Drosophila melanogaster euchromatic genome: a systematic review.</title>
        <authorList>
            <person name="Misra S."/>
            <person name="Crosby M.A."/>
            <person name="Mungall C.J."/>
            <person name="Matthews B.B."/>
            <person name="Campbell K.S."/>
            <person name="Hradecky P."/>
            <person name="Huang Y."/>
            <person name="Kaminker J.S."/>
            <person name="Millburn G.H."/>
            <person name="Prochnik S.E."/>
            <person name="Smith C.D."/>
            <person name="Tupy J.L."/>
            <person name="Whitfield E.J."/>
            <person name="Bayraktaroglu L."/>
            <person name="Berman B.P."/>
            <person name="Bettencourt B.R."/>
            <person name="Celniker S.E."/>
            <person name="de Grey A.D.N.J."/>
            <person name="Drysdale R.A."/>
            <person name="Harris N.L."/>
            <person name="Richter J."/>
            <person name="Russo S."/>
            <person name="Schroeder A.J."/>
            <person name="Shu S.Q."/>
            <person name="Stapleton M."/>
            <person name="Yamada C."/>
            <person name="Ashburner M."/>
            <person name="Gelbart W.M."/>
            <person name="Rubin G.M."/>
            <person name="Lewis S.E."/>
        </authorList>
    </citation>
    <scope>GENOME REANNOTATION</scope>
    <source>
        <strain>Berkeley</strain>
    </source>
</reference>
<reference key="4">
    <citation type="journal article" date="2002" name="Genome Biol.">
        <title>A Drosophila full-length cDNA resource.</title>
        <authorList>
            <person name="Stapleton M."/>
            <person name="Carlson J.W."/>
            <person name="Brokstein P."/>
            <person name="Yu C."/>
            <person name="Champe M."/>
            <person name="George R.A."/>
            <person name="Guarin H."/>
            <person name="Kronmiller B."/>
            <person name="Pacleb J.M."/>
            <person name="Park S."/>
            <person name="Wan K.H."/>
            <person name="Rubin G.M."/>
            <person name="Celniker S.E."/>
        </authorList>
    </citation>
    <scope>NUCLEOTIDE SEQUENCE [LARGE SCALE MRNA]</scope>
    <source>
        <strain>Berkeley</strain>
        <tissue>Embryo</tissue>
    </source>
</reference>
<protein>
    <recommendedName>
        <fullName>TBP-related factor</fullName>
    </recommendedName>
</protein>
<evidence type="ECO:0000256" key="1">
    <source>
        <dbReference type="SAM" id="MobiDB-lite"/>
    </source>
</evidence>
<evidence type="ECO:0000269" key="2">
    <source>
    </source>
</evidence>
<evidence type="ECO:0000305" key="3"/>
<comment type="function">
    <text>Acts as a transcription factor. Binds to the TATA box promoter element which lies close to the position of transcription initiation.</text>
</comment>
<comment type="function">
    <text>May be essential for embryonic development.</text>
</comment>
<comment type="subcellular location">
    <subcellularLocation>
        <location>Nucleus</location>
    </subcellularLocation>
</comment>
<comment type="tissue specificity">
    <text evidence="2">Primary spermatocytes in the adult testis and in a subset of cells in the dorsal medial region of the embryonic CNS.</text>
</comment>
<comment type="similarity">
    <text evidence="3">Belongs to the TBP family.</text>
</comment>
<gene>
    <name type="primary">Trf</name>
    <name type="ORF">CG7562</name>
</gene>
<dbReference type="EMBL" id="X70837">
    <property type="protein sequence ID" value="CAA50185.1"/>
    <property type="molecule type" value="mRNA"/>
</dbReference>
<dbReference type="EMBL" id="X70838">
    <property type="protein sequence ID" value="CAA50186.1"/>
    <property type="molecule type" value="Genomic_DNA"/>
</dbReference>
<dbReference type="EMBL" id="AE014134">
    <property type="protein sequence ID" value="AAF52600.1"/>
    <property type="molecule type" value="Genomic_DNA"/>
</dbReference>
<dbReference type="EMBL" id="AY128483">
    <property type="protein sequence ID" value="AAM75076.1"/>
    <property type="molecule type" value="mRNA"/>
</dbReference>
<dbReference type="PIR" id="S37740">
    <property type="entry name" value="S37740"/>
</dbReference>
<dbReference type="RefSeq" id="NP_476939.1">
    <property type="nucleotide sequence ID" value="NM_057591.4"/>
</dbReference>
<dbReference type="SMR" id="Q27896"/>
<dbReference type="BioGRID" id="60234">
    <property type="interactions" value="6"/>
</dbReference>
<dbReference type="FunCoup" id="Q27896">
    <property type="interactions" value="173"/>
</dbReference>
<dbReference type="IntAct" id="Q27896">
    <property type="interactions" value="2"/>
</dbReference>
<dbReference type="STRING" id="7227.FBpp0079164"/>
<dbReference type="PaxDb" id="7227-FBpp0079164"/>
<dbReference type="EnsemblMetazoa" id="FBtr0079542">
    <property type="protein sequence ID" value="FBpp0079164"/>
    <property type="gene ID" value="FBgn0010287"/>
</dbReference>
<dbReference type="GeneID" id="34102"/>
<dbReference type="KEGG" id="dme:Dmel_CG7562"/>
<dbReference type="AGR" id="FB:FBgn0010287"/>
<dbReference type="CTD" id="22041"/>
<dbReference type="FlyBase" id="FBgn0010287">
    <property type="gene designation" value="Trf"/>
</dbReference>
<dbReference type="VEuPathDB" id="VectorBase:FBgn0010287"/>
<dbReference type="eggNOG" id="KOG3302">
    <property type="taxonomic scope" value="Eukaryota"/>
</dbReference>
<dbReference type="HOGENOM" id="CLU_060161_4_2_1"/>
<dbReference type="InParanoid" id="Q27896"/>
<dbReference type="OMA" id="FHFKIAE"/>
<dbReference type="OrthoDB" id="2127950at2759"/>
<dbReference type="PhylomeDB" id="Q27896"/>
<dbReference type="Reactome" id="R-DME-674695">
    <property type="pathway name" value="RNA Polymerase II Pre-transcription Events"/>
</dbReference>
<dbReference type="Reactome" id="R-DME-6804756">
    <property type="pathway name" value="Regulation of TP53 Activity through Phosphorylation"/>
</dbReference>
<dbReference type="Reactome" id="R-DME-6807505">
    <property type="pathway name" value="RNA polymerase II transcribes snRNA genes"/>
</dbReference>
<dbReference type="Reactome" id="R-DME-73772">
    <property type="pathway name" value="RNA Polymerase I Promoter Escape"/>
</dbReference>
<dbReference type="Reactome" id="R-DME-73776">
    <property type="pathway name" value="RNA Polymerase II Promoter Escape"/>
</dbReference>
<dbReference type="Reactome" id="R-DME-73779">
    <property type="pathway name" value="RNA Polymerase II Transcription Pre-Initiation And Promoter Opening"/>
</dbReference>
<dbReference type="Reactome" id="R-DME-75953">
    <property type="pathway name" value="RNA Polymerase II Transcription Initiation"/>
</dbReference>
<dbReference type="Reactome" id="R-DME-76042">
    <property type="pathway name" value="RNA Polymerase II Transcription Initiation And Promoter Clearance"/>
</dbReference>
<dbReference type="Reactome" id="R-DME-76061">
    <property type="pathway name" value="RNA Polymerase III Transcription Initiation From Type 1 Promoter"/>
</dbReference>
<dbReference type="Reactome" id="R-DME-76066">
    <property type="pathway name" value="RNA Polymerase III Transcription Initiation From Type 2 Promoter"/>
</dbReference>
<dbReference type="Reactome" id="R-DME-9018519">
    <property type="pathway name" value="Estrogen-dependent gene expression"/>
</dbReference>
<dbReference type="SignaLink" id="Q27896"/>
<dbReference type="BioGRID-ORCS" id="34102">
    <property type="hits" value="0 hits in 3 CRISPR screens"/>
</dbReference>
<dbReference type="ChiTaRS" id="Tsf1">
    <property type="organism name" value="fly"/>
</dbReference>
<dbReference type="GenomeRNAi" id="34102"/>
<dbReference type="PRO" id="PR:Q27896"/>
<dbReference type="Proteomes" id="UP000000803">
    <property type="component" value="Chromosome 2L"/>
</dbReference>
<dbReference type="Bgee" id="FBgn0010287">
    <property type="expression patterns" value="Expressed in adult enteroendocrine precursor cell in adult midgut (Drosophila) and 49 other cell types or tissues"/>
</dbReference>
<dbReference type="GO" id="GO:0005634">
    <property type="term" value="C:nucleus"/>
    <property type="evidence" value="ECO:0000314"/>
    <property type="project" value="FlyBase"/>
</dbReference>
<dbReference type="GO" id="GO:0005700">
    <property type="term" value="C:polytene chromosome"/>
    <property type="evidence" value="ECO:0000314"/>
    <property type="project" value="FlyBase"/>
</dbReference>
<dbReference type="GO" id="GO:0005669">
    <property type="term" value="C:transcription factor TFIID complex"/>
    <property type="evidence" value="ECO:0000250"/>
    <property type="project" value="FlyBase"/>
</dbReference>
<dbReference type="GO" id="GO:0005667">
    <property type="term" value="C:transcription regulator complex"/>
    <property type="evidence" value="ECO:0000353"/>
    <property type="project" value="FlyBase"/>
</dbReference>
<dbReference type="GO" id="GO:0003677">
    <property type="term" value="F:DNA binding"/>
    <property type="evidence" value="ECO:0000314"/>
    <property type="project" value="FlyBase"/>
</dbReference>
<dbReference type="GO" id="GO:0140223">
    <property type="term" value="F:general transcription initiation factor activity"/>
    <property type="evidence" value="ECO:0000318"/>
    <property type="project" value="GO_Central"/>
</dbReference>
<dbReference type="GO" id="GO:0000978">
    <property type="term" value="F:RNA polymerase II cis-regulatory region sequence-specific DNA binding"/>
    <property type="evidence" value="ECO:0000314"/>
    <property type="project" value="FlyBase"/>
</dbReference>
<dbReference type="GO" id="GO:0001025">
    <property type="term" value="F:RNA polymerase III general transcription initiation factor binding"/>
    <property type="evidence" value="ECO:0000353"/>
    <property type="project" value="FlyBase"/>
</dbReference>
<dbReference type="GO" id="GO:0001003">
    <property type="term" value="F:RNA polymerase III type 2 promoter sequence-specific DNA binding"/>
    <property type="evidence" value="ECO:0000314"/>
    <property type="project" value="FlyBase"/>
</dbReference>
<dbReference type="GO" id="GO:0001092">
    <property type="term" value="F:TFIIA-class transcription factor complex binding"/>
    <property type="evidence" value="ECO:0000314"/>
    <property type="project" value="FlyBase"/>
</dbReference>
<dbReference type="GO" id="GO:0001093">
    <property type="term" value="F:TFIIB-class transcription factor binding"/>
    <property type="evidence" value="ECO:0000353"/>
    <property type="project" value="FlyBase"/>
</dbReference>
<dbReference type="GO" id="GO:0006352">
    <property type="term" value="P:DNA-templated transcription initiation"/>
    <property type="evidence" value="ECO:0000318"/>
    <property type="project" value="GO_Central"/>
</dbReference>
<dbReference type="GO" id="GO:0009792">
    <property type="term" value="P:embryo development ending in birth or egg hatching"/>
    <property type="evidence" value="ECO:0000250"/>
    <property type="project" value="UniProtKB"/>
</dbReference>
<dbReference type="GO" id="GO:0006366">
    <property type="term" value="P:transcription by RNA polymerase II"/>
    <property type="evidence" value="ECO:0000314"/>
    <property type="project" value="FlyBase"/>
</dbReference>
<dbReference type="GO" id="GO:0006383">
    <property type="term" value="P:transcription by RNA polymerase III"/>
    <property type="evidence" value="ECO:0000314"/>
    <property type="project" value="FlyBase"/>
</dbReference>
<dbReference type="GO" id="GO:0006367">
    <property type="term" value="P:transcription initiation at RNA polymerase II promoter"/>
    <property type="evidence" value="ECO:0000314"/>
    <property type="project" value="FlyBase"/>
</dbReference>
<dbReference type="GO" id="GO:0006384">
    <property type="term" value="P:transcription initiation at RNA polymerase III promoter"/>
    <property type="evidence" value="ECO:0000270"/>
    <property type="project" value="FlyBase"/>
</dbReference>
<dbReference type="GO" id="GO:0042797">
    <property type="term" value="P:tRNA transcription by RNA polymerase III"/>
    <property type="evidence" value="ECO:0000314"/>
    <property type="project" value="FlyBase"/>
</dbReference>
<dbReference type="CDD" id="cd04516">
    <property type="entry name" value="TBP_eukaryotes"/>
    <property type="match status" value="1"/>
</dbReference>
<dbReference type="FunFam" id="3.30.310.10:FF:000005">
    <property type="entry name" value="TATA box-binding protein-like 1"/>
    <property type="match status" value="1"/>
</dbReference>
<dbReference type="FunFam" id="3.30.310.10:FF:000002">
    <property type="entry name" value="TATA-box-binding protein 2"/>
    <property type="match status" value="1"/>
</dbReference>
<dbReference type="Gene3D" id="3.30.310.10">
    <property type="entry name" value="TATA-Binding Protein"/>
    <property type="match status" value="2"/>
</dbReference>
<dbReference type="HAMAP" id="MF_00408">
    <property type="entry name" value="TATA_bind_prot_arch"/>
    <property type="match status" value="1"/>
</dbReference>
<dbReference type="InterPro" id="IPR000814">
    <property type="entry name" value="TBP"/>
</dbReference>
<dbReference type="InterPro" id="IPR030491">
    <property type="entry name" value="TBP_CS"/>
</dbReference>
<dbReference type="InterPro" id="IPR012295">
    <property type="entry name" value="TBP_dom_sf"/>
</dbReference>
<dbReference type="InterPro" id="IPR033710">
    <property type="entry name" value="TBP_eukaryotic"/>
</dbReference>
<dbReference type="PANTHER" id="PTHR10126">
    <property type="entry name" value="TATA-BOX BINDING PROTEIN"/>
    <property type="match status" value="1"/>
</dbReference>
<dbReference type="Pfam" id="PF00352">
    <property type="entry name" value="TBP"/>
    <property type="match status" value="2"/>
</dbReference>
<dbReference type="PRINTS" id="PR00686">
    <property type="entry name" value="TIFACTORIID"/>
</dbReference>
<dbReference type="SUPFAM" id="SSF55945">
    <property type="entry name" value="TATA-box binding protein-like"/>
    <property type="match status" value="2"/>
</dbReference>
<dbReference type="PROSITE" id="PS00351">
    <property type="entry name" value="TFIID"/>
    <property type="match status" value="2"/>
</dbReference>
<sequence length="224" mass="25456">MQFHFKVADAERDRDNVAATSNAAANPHAALQPQQPVALVEPKDAQHEIRLQNIVATFSVNCELDLKAINSRTRNSEYSPKRFRGVIMRMHSPRCTALIFRTGKVICTGARNEIEADIGSRKFARILQKLGFPVKFMEYKLQNIVATVDLRFPIRLENLNHVHGQFSSYEPEMFPGLIYRMVKPRIVLLIFVNGKVVFTGAKSRKDIMDCLEAISPILLSFRKT</sequence>
<proteinExistence type="evidence at transcript level"/>
<accession>Q27896</accession>
<keyword id="KW-0238">DNA-binding</keyword>
<keyword id="KW-0539">Nucleus</keyword>
<keyword id="KW-1185">Reference proteome</keyword>
<keyword id="KW-0677">Repeat</keyword>
<keyword id="KW-0804">Transcription</keyword>
<keyword id="KW-0805">Transcription regulation</keyword>
<organism>
    <name type="scientific">Drosophila melanogaster</name>
    <name type="common">Fruit fly</name>
    <dbReference type="NCBI Taxonomy" id="7227"/>
    <lineage>
        <taxon>Eukaryota</taxon>
        <taxon>Metazoa</taxon>
        <taxon>Ecdysozoa</taxon>
        <taxon>Arthropoda</taxon>
        <taxon>Hexapoda</taxon>
        <taxon>Insecta</taxon>
        <taxon>Pterygota</taxon>
        <taxon>Neoptera</taxon>
        <taxon>Endopterygota</taxon>
        <taxon>Diptera</taxon>
        <taxon>Brachycera</taxon>
        <taxon>Muscomorpha</taxon>
        <taxon>Ephydroidea</taxon>
        <taxon>Drosophilidae</taxon>
        <taxon>Drosophila</taxon>
        <taxon>Sophophora</taxon>
    </lineage>
</organism>